<organism>
    <name type="scientific">Acinetobacter baylyi (strain ATCC 33305 / BD413 / ADP1)</name>
    <dbReference type="NCBI Taxonomy" id="62977"/>
    <lineage>
        <taxon>Bacteria</taxon>
        <taxon>Pseudomonadati</taxon>
        <taxon>Pseudomonadota</taxon>
        <taxon>Gammaproteobacteria</taxon>
        <taxon>Moraxellales</taxon>
        <taxon>Moraxellaceae</taxon>
        <taxon>Acinetobacter</taxon>
    </lineage>
</organism>
<accession>P70736</accession>
<feature type="chain" id="PRO_0000172733" description="Uncharacterized protein ACIAD3023">
    <location>
        <begin position="1"/>
        <end position="143"/>
    </location>
</feature>
<name>Y3023_ACIAD</name>
<proteinExistence type="inferred from homology"/>
<reference key="1">
    <citation type="journal article" date="1997" name="J. Bacteriol.">
        <title>Identification and characterization of xcpR encoding a subunit of the general secretory pathway necessary for dodecane degradation in Acinetobacter calcoaceticus ADP1.</title>
        <authorList>
            <person name="Parche S."/>
            <person name="Geiszdorfer W."/>
            <person name="Hillen W."/>
        </authorList>
    </citation>
    <scope>NUCLEOTIDE SEQUENCE [GENOMIC DNA]</scope>
</reference>
<reference key="2">
    <citation type="journal article" date="2004" name="Nucleic Acids Res.">
        <title>Unique features revealed by the genome sequence of Acinetobacter sp. ADP1, a versatile and naturally transformation competent bacterium.</title>
        <authorList>
            <person name="Barbe V."/>
            <person name="Vallenet D."/>
            <person name="Fonknechten N."/>
            <person name="Kreimeyer A."/>
            <person name="Oztas S."/>
            <person name="Labarre L."/>
            <person name="Cruveiller S."/>
            <person name="Robert C."/>
            <person name="Duprat S."/>
            <person name="Wincker P."/>
            <person name="Ornston L.N."/>
            <person name="Weissenbach J."/>
            <person name="Marliere P."/>
            <person name="Cohen G.N."/>
            <person name="Medigue C."/>
        </authorList>
    </citation>
    <scope>NUCLEOTIDE SEQUENCE [LARGE SCALE GENOMIC DNA]</scope>
    <source>
        <strain>ATCC 33305 / BD413 / ADP1</strain>
    </source>
</reference>
<evidence type="ECO:0000305" key="1"/>
<protein>
    <recommendedName>
        <fullName>Uncharacterized protein ACIAD3023</fullName>
    </recommendedName>
    <alternativeName>
        <fullName>ORF2</fullName>
    </alternativeName>
</protein>
<sequence>MSLEQVVYTAHAKATGGRDGRATSSDNILDVQLTVPKEMGGMGGGTNPEQLFAAGYSACFLGAMKFVATRDKFNIPKDAYVEGDVGIGPIPNGFGIEVKLHVHLPGMDTDEAKKLVDAAHIVCPYSNATRNNIDVDFEIVTDA</sequence>
<comment type="similarity">
    <text evidence="1">Belongs to the OsmC/Ohr family.</text>
</comment>
<gene>
    <name type="ordered locus">ACIAD3023</name>
</gene>
<dbReference type="EMBL" id="Y09102">
    <property type="protein sequence ID" value="CAA70320.1"/>
    <property type="molecule type" value="Genomic_DNA"/>
</dbReference>
<dbReference type="EMBL" id="CR543861">
    <property type="protein sequence ID" value="CAG69727.1"/>
    <property type="molecule type" value="Genomic_DNA"/>
</dbReference>
<dbReference type="RefSeq" id="WP_004924589.1">
    <property type="nucleotide sequence ID" value="NC_005966.1"/>
</dbReference>
<dbReference type="SMR" id="P70736"/>
<dbReference type="STRING" id="202950.GCA_001485005_02687"/>
<dbReference type="GeneID" id="45235249"/>
<dbReference type="KEGG" id="aci:ACIAD3023"/>
<dbReference type="eggNOG" id="COG1764">
    <property type="taxonomic scope" value="Bacteria"/>
</dbReference>
<dbReference type="HOGENOM" id="CLU_106355_2_1_6"/>
<dbReference type="OrthoDB" id="9797508at2"/>
<dbReference type="BioCyc" id="ASP62977:ACIAD_RS13670-MONOMER"/>
<dbReference type="Proteomes" id="UP000000430">
    <property type="component" value="Chromosome"/>
</dbReference>
<dbReference type="GO" id="GO:0006979">
    <property type="term" value="P:response to oxidative stress"/>
    <property type="evidence" value="ECO:0007669"/>
    <property type="project" value="InterPro"/>
</dbReference>
<dbReference type="Gene3D" id="2.20.25.10">
    <property type="match status" value="1"/>
</dbReference>
<dbReference type="Gene3D" id="3.30.300.20">
    <property type="match status" value="1"/>
</dbReference>
<dbReference type="InterPro" id="IPR015946">
    <property type="entry name" value="KH_dom-like_a/b"/>
</dbReference>
<dbReference type="InterPro" id="IPR019953">
    <property type="entry name" value="OHR"/>
</dbReference>
<dbReference type="InterPro" id="IPR003718">
    <property type="entry name" value="OsmC/Ohr_fam"/>
</dbReference>
<dbReference type="InterPro" id="IPR036102">
    <property type="entry name" value="OsmC/Ohrsf"/>
</dbReference>
<dbReference type="NCBIfam" id="TIGR03561">
    <property type="entry name" value="organ_hyd_perox"/>
    <property type="match status" value="1"/>
</dbReference>
<dbReference type="PANTHER" id="PTHR33797">
    <property type="entry name" value="ORGANIC HYDROPEROXIDE RESISTANCE PROTEIN-LIKE"/>
    <property type="match status" value="1"/>
</dbReference>
<dbReference type="PANTHER" id="PTHR33797:SF2">
    <property type="entry name" value="ORGANIC HYDROPEROXIDE RESISTANCE PROTEIN-LIKE"/>
    <property type="match status" value="1"/>
</dbReference>
<dbReference type="Pfam" id="PF02566">
    <property type="entry name" value="OsmC"/>
    <property type="match status" value="1"/>
</dbReference>
<dbReference type="SUPFAM" id="SSF82784">
    <property type="entry name" value="OsmC-like"/>
    <property type="match status" value="1"/>
</dbReference>